<reference key="1">
    <citation type="journal article" date="2004" name="Genome Res.">
        <title>The status, quality, and expansion of the NIH full-length cDNA project: the Mammalian Gene Collection (MGC).</title>
        <authorList>
            <consortium name="The MGC Project Team"/>
        </authorList>
    </citation>
    <scope>NUCLEOTIDE SEQUENCE [LARGE SCALE MRNA]</scope>
    <source>
        <tissue>Testis</tissue>
    </source>
</reference>
<evidence type="ECO:0000250" key="1"/>
<evidence type="ECO:0000250" key="2">
    <source>
        <dbReference type="UniProtKB" id="Q6P589"/>
    </source>
</evidence>
<evidence type="ECO:0000250" key="3">
    <source>
        <dbReference type="UniProtKB" id="Q9D8Y7"/>
    </source>
</evidence>
<evidence type="ECO:0000305" key="4"/>
<organism>
    <name type="scientific">Rattus norvegicus</name>
    <name type="common">Rat</name>
    <dbReference type="NCBI Taxonomy" id="10116"/>
    <lineage>
        <taxon>Eukaryota</taxon>
        <taxon>Metazoa</taxon>
        <taxon>Chordata</taxon>
        <taxon>Craniata</taxon>
        <taxon>Vertebrata</taxon>
        <taxon>Euteleostomi</taxon>
        <taxon>Mammalia</taxon>
        <taxon>Eutheria</taxon>
        <taxon>Euarchontoglires</taxon>
        <taxon>Glires</taxon>
        <taxon>Rodentia</taxon>
        <taxon>Myomorpha</taxon>
        <taxon>Muroidea</taxon>
        <taxon>Muridae</taxon>
        <taxon>Murinae</taxon>
        <taxon>Rattus</taxon>
    </lineage>
</organism>
<protein>
    <recommendedName>
        <fullName>Tumor necrosis factor alpha-induced protein 8-like protein 2</fullName>
        <shortName>TIPE2</shortName>
        <shortName>TNF alpha-induced protein 8-like protein 2</shortName>
        <shortName>TNFAIP8-like protein 2</shortName>
    </recommendedName>
</protein>
<proteinExistence type="evidence at transcript level"/>
<gene>
    <name type="primary">Tnfaip8l2</name>
</gene>
<feature type="chain" id="PRO_0000285773" description="Tumor necrosis factor alpha-induced protein 8-like protein 2">
    <location>
        <begin position="1"/>
        <end position="184"/>
    </location>
</feature>
<feature type="modified residue" description="Phosphoserine" evidence="2">
    <location>
        <position position="3"/>
    </location>
</feature>
<dbReference type="EMBL" id="BC079019">
    <property type="protein sequence ID" value="AAH79019.1"/>
    <property type="molecule type" value="mRNA"/>
</dbReference>
<dbReference type="RefSeq" id="NP_001014061.1">
    <property type="nucleotide sequence ID" value="NM_001014039.1"/>
</dbReference>
<dbReference type="SMR" id="Q6AYJ8"/>
<dbReference type="FunCoup" id="Q6AYJ8">
    <property type="interactions" value="267"/>
</dbReference>
<dbReference type="STRING" id="10116.ENSRNOP00000028642"/>
<dbReference type="PhosphoSitePlus" id="Q6AYJ8"/>
<dbReference type="PaxDb" id="10116-ENSRNOP00000028642"/>
<dbReference type="Ensembl" id="ENSRNOT00000028642.5">
    <property type="protein sequence ID" value="ENSRNOP00000028642.3"/>
    <property type="gene ID" value="ENSRNOG00000021100.5"/>
</dbReference>
<dbReference type="Ensembl" id="ENSRNOT00000116833.1">
    <property type="protein sequence ID" value="ENSRNOP00000094344.1"/>
    <property type="gene ID" value="ENSRNOG00000021100.5"/>
</dbReference>
<dbReference type="GeneID" id="310663"/>
<dbReference type="KEGG" id="rno:310663"/>
<dbReference type="UCSC" id="RGD:1310519">
    <property type="organism name" value="rat"/>
</dbReference>
<dbReference type="AGR" id="RGD:1310519"/>
<dbReference type="CTD" id="79626"/>
<dbReference type="RGD" id="1310519">
    <property type="gene designation" value="Tnfaip8l2"/>
</dbReference>
<dbReference type="eggNOG" id="ENOG502QST4">
    <property type="taxonomic scope" value="Eukaryota"/>
</dbReference>
<dbReference type="GeneTree" id="ENSGT00390000003488"/>
<dbReference type="HOGENOM" id="CLU_085918_1_0_1"/>
<dbReference type="InParanoid" id="Q6AYJ8"/>
<dbReference type="OMA" id="IRRVFDH"/>
<dbReference type="OrthoDB" id="10055976at2759"/>
<dbReference type="PhylomeDB" id="Q6AYJ8"/>
<dbReference type="TreeFam" id="TF323415"/>
<dbReference type="Reactome" id="R-RNO-1483255">
    <property type="pathway name" value="PI Metabolism"/>
</dbReference>
<dbReference type="PRO" id="PR:Q6AYJ8"/>
<dbReference type="Proteomes" id="UP000002494">
    <property type="component" value="Chromosome 2"/>
</dbReference>
<dbReference type="Bgee" id="ENSRNOG00000021100">
    <property type="expression patterns" value="Expressed in spleen and 19 other cell types or tissues"/>
</dbReference>
<dbReference type="GO" id="GO:0005737">
    <property type="term" value="C:cytoplasm"/>
    <property type="evidence" value="ECO:0000266"/>
    <property type="project" value="RGD"/>
</dbReference>
<dbReference type="GO" id="GO:0005764">
    <property type="term" value="C:lysosome"/>
    <property type="evidence" value="ECO:0007669"/>
    <property type="project" value="UniProtKB-SubCell"/>
</dbReference>
<dbReference type="GO" id="GO:0005634">
    <property type="term" value="C:nucleus"/>
    <property type="evidence" value="ECO:0007669"/>
    <property type="project" value="UniProtKB-SubCell"/>
</dbReference>
<dbReference type="GO" id="GO:0045087">
    <property type="term" value="P:innate immune response"/>
    <property type="evidence" value="ECO:0007669"/>
    <property type="project" value="UniProtKB-KW"/>
</dbReference>
<dbReference type="GO" id="GO:0050728">
    <property type="term" value="P:negative regulation of inflammatory response"/>
    <property type="evidence" value="ECO:0000266"/>
    <property type="project" value="RGD"/>
</dbReference>
<dbReference type="GO" id="GO:0050868">
    <property type="term" value="P:negative regulation of T cell activation"/>
    <property type="evidence" value="ECO:0000266"/>
    <property type="project" value="RGD"/>
</dbReference>
<dbReference type="GO" id="GO:0042981">
    <property type="term" value="P:regulation of apoptotic process"/>
    <property type="evidence" value="ECO:0007669"/>
    <property type="project" value="InterPro"/>
</dbReference>
<dbReference type="GO" id="GO:0042110">
    <property type="term" value="P:T cell activation"/>
    <property type="evidence" value="ECO:0000266"/>
    <property type="project" value="RGD"/>
</dbReference>
<dbReference type="FunFam" id="1.20.1440.160:FF:000001">
    <property type="entry name" value="Tumor necrosis factor alpha-induced protein 8-like 1"/>
    <property type="match status" value="1"/>
</dbReference>
<dbReference type="Gene3D" id="1.20.1440.160">
    <property type="entry name" value="Tumor necrosis factor alpha-induced protein 8-like"/>
    <property type="match status" value="1"/>
</dbReference>
<dbReference type="InterPro" id="IPR008477">
    <property type="entry name" value="TNFAIP8-like"/>
</dbReference>
<dbReference type="InterPro" id="IPR038355">
    <property type="entry name" value="TNFAIP8_sf"/>
</dbReference>
<dbReference type="PANTHER" id="PTHR12757:SF4">
    <property type="entry name" value="TUMOR NECROSIS FACTOR ALPHA-INDUCED PROTEIN 8-LIKE PROTEIN 2"/>
    <property type="match status" value="1"/>
</dbReference>
<dbReference type="PANTHER" id="PTHR12757">
    <property type="entry name" value="TUMOR NECROSIS FACTOR INDUCED PROTEIN"/>
    <property type="match status" value="1"/>
</dbReference>
<dbReference type="Pfam" id="PF05527">
    <property type="entry name" value="DUF758"/>
    <property type="match status" value="1"/>
</dbReference>
<accession>Q6AYJ8</accession>
<sequence>MESFSSKSLALQAEKKLLSKMAGRSVAHLFIDETSSEVLDELYRVSKEYTHSRSKAQRVIKDLIKVAVKVAVLHRSGCFSPGELALATRFRQKLRQGAMTALSFGEVDFTFEAAVLAGLLIECREILLELVEHHLTPKSHDRIRHVFDHYSDPDLLTALYGPDFTQHLDKICDGLRKLLDEGKL</sequence>
<name>TP8L2_RAT</name>
<comment type="function">
    <text evidence="2 3">Acts as a negative regulator of innate and adaptive immunity by maintaining immune homeostasis. Plays a regulatory role in the Toll-like signaling pathway by determining the strength of LPS-induced signaling and gene expression (By similarity). Inhibits TCR-mediated T-cell activation and negatively regulate T-cell function to prevent hyperresponsiveness (By similarity). Also inhibits autolysosome formation via negatively modulating MTOR activation by interacting with RAC1 and promoting the disassociation of the RAC1-MTOR complex (By similarity). Plays an essential role in NK-cell biology by acting as a checkpoint and displaying an expression pattern correlating with NK-cell maturation process and by negatively regulating NK-cell maturation and antitumor immunity (By similarity). Mechanistically, suppresses IL-15-triggered mTOR activity in NK-cells (By similarity).</text>
</comment>
<comment type="subunit">
    <text evidence="2">May interact with CASP8; however, such result is unclear since could not reproduce the interaction with CASP8. Interacts with RAC1.</text>
</comment>
<comment type="subcellular location">
    <subcellularLocation>
        <location evidence="2">Cytoplasm</location>
    </subcellularLocation>
    <subcellularLocation>
        <location evidence="2">Nucleus</location>
    </subcellularLocation>
    <subcellularLocation>
        <location evidence="2">Lysosome</location>
    </subcellularLocation>
</comment>
<comment type="domain">
    <text evidence="1">The central region was initially thought to constitute a DED (death effector) domain. However, 3D-structure data reveal a previously uncharacterized fold that is different from the predicted fold of a DED (death effector) domain. It consists of a large, hydrophobic central cavity that is poised for cofactor binding (By similarity).</text>
</comment>
<comment type="PTM">
    <text evidence="2">Phosphorylated by TAK1/MAP3K7; this phosphorylation triggers association with BTRC and subsequent ubiquitination and degradation.</text>
</comment>
<comment type="PTM">
    <text evidence="2">Ubiquitinated in a BTRC-depdent manner; leading to degradation mediated through the proteasome pathway.</text>
</comment>
<comment type="similarity">
    <text evidence="4">Belongs to the TNFAIP8 family. TNFAIP8L2 subfamily.</text>
</comment>
<keyword id="KW-0963">Cytoplasm</keyword>
<keyword id="KW-0391">Immunity</keyword>
<keyword id="KW-0399">Innate immunity</keyword>
<keyword id="KW-0458">Lysosome</keyword>
<keyword id="KW-0539">Nucleus</keyword>
<keyword id="KW-0597">Phosphoprotein</keyword>
<keyword id="KW-1185">Reference proteome</keyword>
<keyword id="KW-0832">Ubl conjugation</keyword>